<evidence type="ECO:0000250" key="1"/>
<evidence type="ECO:0000250" key="2">
    <source>
        <dbReference type="UniProtKB" id="Q9JHG2"/>
    </source>
</evidence>
<evidence type="ECO:0000256" key="3">
    <source>
        <dbReference type="SAM" id="MobiDB-lite"/>
    </source>
</evidence>
<evidence type="ECO:0000305" key="4"/>
<protein>
    <recommendedName>
        <fullName>Calcipressin-2</fullName>
    </recommendedName>
    <alternativeName>
        <fullName>Down syndrome candidate region 1-like protein 1</fullName>
    </alternativeName>
    <alternativeName>
        <fullName>Regulator of calcineurin 2</fullName>
    </alternativeName>
</protein>
<feature type="chain" id="PRO_0000297548" description="Calcipressin-2">
    <location>
        <begin position="1"/>
        <end position="197"/>
    </location>
</feature>
<feature type="region of interest" description="Disordered" evidence="3">
    <location>
        <begin position="166"/>
        <end position="197"/>
    </location>
</feature>
<feature type="modified residue" description="Phosphoserine" evidence="2">
    <location>
        <position position="167"/>
    </location>
</feature>
<reference key="1">
    <citation type="journal article" date="2007" name="Gene">
        <title>Mapping of chimpanzee full-length cDNAs onto the human genome unveils large potential divergence of the transcriptome.</title>
        <authorList>
            <person name="Sakate R."/>
            <person name="Suto Y."/>
            <person name="Imanishi T."/>
            <person name="Tanoue T."/>
            <person name="Hida M."/>
            <person name="Hayasaka I."/>
            <person name="Kusuda J."/>
            <person name="Gojobori T."/>
            <person name="Hashimoto K."/>
            <person name="Hirai M."/>
        </authorList>
    </citation>
    <scope>NUCLEOTIDE SEQUENCE [MRNA]</scope>
    <source>
        <tissue>Brain</tissue>
    </source>
</reference>
<sequence length="197" mass="21997">MPAPSMDCDVSTLVACVVDVEVFTNQEVKEKFEGLFRTYDDCVTFQLFKSFRRVRINFSNPKSAARARIELHETQFRGKKLKLYFAQVQTPETDGDKLHLAPPQPAKQFLISPPSSPPVGWQPINDATPVLNYDLLYAVAKLGPGEKYELHAGTESTPSVVVHVCDSDIEEEEDPKTSPKPKIIQTRRPGLPPSVSN</sequence>
<accession>A5A6I8</accession>
<name>RCAN2_PANTR</name>
<proteinExistence type="evidence at transcript level"/>
<dbReference type="EMBL" id="AB222116">
    <property type="protein sequence ID" value="BAF62361.1"/>
    <property type="status" value="ALT_INIT"/>
    <property type="molecule type" value="mRNA"/>
</dbReference>
<dbReference type="RefSeq" id="NP_001098711.1">
    <property type="nucleotide sequence ID" value="NM_001105241.1"/>
</dbReference>
<dbReference type="SMR" id="A5A6I8"/>
<dbReference type="FunCoup" id="A5A6I8">
    <property type="interactions" value="418"/>
</dbReference>
<dbReference type="STRING" id="9598.ENSPTRP00000082602"/>
<dbReference type="PaxDb" id="9598-ENSPTRP00000031159"/>
<dbReference type="Ensembl" id="ENSPTRT00000033715.5">
    <property type="protein sequence ID" value="ENSPTRP00000031159.4"/>
    <property type="gene ID" value="ENSPTRG00000018233.7"/>
</dbReference>
<dbReference type="GeneID" id="462742"/>
<dbReference type="KEGG" id="ptr:462742"/>
<dbReference type="CTD" id="10231"/>
<dbReference type="VGNC" id="VGNC:3680">
    <property type="gene designation" value="RCAN2"/>
</dbReference>
<dbReference type="eggNOG" id="KOG4019">
    <property type="taxonomic scope" value="Eukaryota"/>
</dbReference>
<dbReference type="GeneTree" id="ENSGT00940000159767"/>
<dbReference type="HOGENOM" id="CLU_076190_2_1_1"/>
<dbReference type="InParanoid" id="A5A6I8"/>
<dbReference type="TreeFam" id="TF313579"/>
<dbReference type="Proteomes" id="UP000002277">
    <property type="component" value="Chromosome 6"/>
</dbReference>
<dbReference type="Bgee" id="ENSPTRG00000018233">
    <property type="expression patterns" value="Expressed in primary visual cortex and 21 other cell types or tissues"/>
</dbReference>
<dbReference type="GO" id="GO:0005737">
    <property type="term" value="C:cytoplasm"/>
    <property type="evidence" value="ECO:0000318"/>
    <property type="project" value="GO_Central"/>
</dbReference>
<dbReference type="GO" id="GO:0005634">
    <property type="term" value="C:nucleus"/>
    <property type="evidence" value="ECO:0000318"/>
    <property type="project" value="GO_Central"/>
</dbReference>
<dbReference type="GO" id="GO:0008597">
    <property type="term" value="F:calcium-dependent protein serine/threonine phosphatase regulator activity"/>
    <property type="evidence" value="ECO:0000318"/>
    <property type="project" value="GO_Central"/>
</dbReference>
<dbReference type="GO" id="GO:0003676">
    <property type="term" value="F:nucleic acid binding"/>
    <property type="evidence" value="ECO:0007669"/>
    <property type="project" value="InterPro"/>
</dbReference>
<dbReference type="GO" id="GO:0019722">
    <property type="term" value="P:calcium-mediated signaling"/>
    <property type="evidence" value="ECO:0000318"/>
    <property type="project" value="GO_Central"/>
</dbReference>
<dbReference type="CDD" id="cd12709">
    <property type="entry name" value="RRM_RCAN2"/>
    <property type="match status" value="1"/>
</dbReference>
<dbReference type="FunFam" id="3.30.70.330:FF:000092">
    <property type="entry name" value="Calcipressin-2 isoform 2"/>
    <property type="match status" value="1"/>
</dbReference>
<dbReference type="Gene3D" id="3.30.70.330">
    <property type="match status" value="1"/>
</dbReference>
<dbReference type="InterPro" id="IPR006931">
    <property type="entry name" value="Calcipressin"/>
</dbReference>
<dbReference type="InterPro" id="IPR012677">
    <property type="entry name" value="Nucleotide-bd_a/b_plait_sf"/>
</dbReference>
<dbReference type="InterPro" id="IPR035979">
    <property type="entry name" value="RBD_domain_sf"/>
</dbReference>
<dbReference type="InterPro" id="IPR034919">
    <property type="entry name" value="RCAN2_RRM"/>
</dbReference>
<dbReference type="PANTHER" id="PTHR10300">
    <property type="entry name" value="CALCIPRESSIN"/>
    <property type="match status" value="1"/>
</dbReference>
<dbReference type="PANTHER" id="PTHR10300:SF5">
    <property type="entry name" value="CALCIPRESSIN-2"/>
    <property type="match status" value="1"/>
</dbReference>
<dbReference type="Pfam" id="PF04847">
    <property type="entry name" value="Calcipressin"/>
    <property type="match status" value="1"/>
</dbReference>
<dbReference type="SUPFAM" id="SSF54928">
    <property type="entry name" value="RNA-binding domain, RBD"/>
    <property type="match status" value="1"/>
</dbReference>
<gene>
    <name type="primary">RCAN2</name>
    <name type="synonym">DSCR1L1</name>
</gene>
<keyword id="KW-0597">Phosphoprotein</keyword>
<keyword id="KW-1185">Reference proteome</keyword>
<organism>
    <name type="scientific">Pan troglodytes</name>
    <name type="common">Chimpanzee</name>
    <dbReference type="NCBI Taxonomy" id="9598"/>
    <lineage>
        <taxon>Eukaryota</taxon>
        <taxon>Metazoa</taxon>
        <taxon>Chordata</taxon>
        <taxon>Craniata</taxon>
        <taxon>Vertebrata</taxon>
        <taxon>Euteleostomi</taxon>
        <taxon>Mammalia</taxon>
        <taxon>Eutheria</taxon>
        <taxon>Euarchontoglires</taxon>
        <taxon>Primates</taxon>
        <taxon>Haplorrhini</taxon>
        <taxon>Catarrhini</taxon>
        <taxon>Hominidae</taxon>
        <taxon>Pan</taxon>
    </lineage>
</organism>
<comment type="function">
    <text evidence="1">Inhibits calcineurin-dependent transcriptional responses by binding to the catalytic domain of calcineurin A. Could play a role during central nervous system development (By similarity).</text>
</comment>
<comment type="similarity">
    <text evidence="4">Belongs to the RCAN family.</text>
</comment>
<comment type="sequence caution" evidence="4">
    <conflict type="erroneous initiation">
        <sequence resource="EMBL-CDS" id="BAF62361"/>
    </conflict>
</comment>